<comment type="function">
    <text evidence="1">Catalyzes the complicated ring closure reaction between the two acyclic compounds 1-deoxy-D-xylulose-5-phosphate (DXP) and 3-amino-2-oxopropyl phosphate (1-amino-acetone-3-phosphate or AAP) to form pyridoxine 5'-phosphate (PNP) and inorganic phosphate.</text>
</comment>
<comment type="catalytic activity">
    <reaction evidence="1">
        <text>3-amino-2-oxopropyl phosphate + 1-deoxy-D-xylulose 5-phosphate = pyridoxine 5'-phosphate + phosphate + 2 H2O + H(+)</text>
        <dbReference type="Rhea" id="RHEA:15265"/>
        <dbReference type="ChEBI" id="CHEBI:15377"/>
        <dbReference type="ChEBI" id="CHEBI:15378"/>
        <dbReference type="ChEBI" id="CHEBI:43474"/>
        <dbReference type="ChEBI" id="CHEBI:57279"/>
        <dbReference type="ChEBI" id="CHEBI:57792"/>
        <dbReference type="ChEBI" id="CHEBI:58589"/>
        <dbReference type="EC" id="2.6.99.2"/>
    </reaction>
</comment>
<comment type="pathway">
    <text evidence="1">Cofactor biosynthesis; pyridoxine 5'-phosphate biosynthesis; pyridoxine 5'-phosphate from D-erythrose 4-phosphate: step 5/5.</text>
</comment>
<comment type="subunit">
    <text evidence="1">Homooctamer; tetramer of dimers.</text>
</comment>
<comment type="subcellular location">
    <subcellularLocation>
        <location evidence="1">Cytoplasm</location>
    </subcellularLocation>
</comment>
<comment type="similarity">
    <text evidence="1">Belongs to the PNP synthase family.</text>
</comment>
<protein>
    <recommendedName>
        <fullName evidence="1">Pyridoxine 5'-phosphate synthase</fullName>
        <shortName evidence="1">PNP synthase</shortName>
        <ecNumber evidence="1">2.6.99.2</ecNumber>
    </recommendedName>
</protein>
<reference key="1">
    <citation type="journal article" date="2008" name="PLoS ONE">
        <title>Genome sequence of the saprophyte Leptospira biflexa provides insights into the evolution of Leptospira and the pathogenesis of leptospirosis.</title>
        <authorList>
            <person name="Picardeau M."/>
            <person name="Bulach D.M."/>
            <person name="Bouchier C."/>
            <person name="Zuerner R.L."/>
            <person name="Zidane N."/>
            <person name="Wilson P.J."/>
            <person name="Creno S."/>
            <person name="Kuczek E.S."/>
            <person name="Bommezzadri S."/>
            <person name="Davis J.C."/>
            <person name="McGrath A."/>
            <person name="Johnson M.J."/>
            <person name="Boursaux-Eude C."/>
            <person name="Seemann T."/>
            <person name="Rouy Z."/>
            <person name="Coppel R.L."/>
            <person name="Rood J.I."/>
            <person name="Lajus A."/>
            <person name="Davies J.K."/>
            <person name="Medigue C."/>
            <person name="Adler B."/>
        </authorList>
    </citation>
    <scope>NUCLEOTIDE SEQUENCE [LARGE SCALE GENOMIC DNA]</scope>
    <source>
        <strain>Patoc 1 / ATCC 23582 / Paris</strain>
    </source>
</reference>
<feature type="chain" id="PRO_1000114815" description="Pyridoxine 5'-phosphate synthase">
    <location>
        <begin position="1"/>
        <end position="260"/>
    </location>
</feature>
<feature type="active site" description="Proton acceptor" evidence="1">
    <location>
        <position position="43"/>
    </location>
</feature>
<feature type="active site" description="Proton acceptor" evidence="1">
    <location>
        <position position="83"/>
    </location>
</feature>
<feature type="active site" description="Proton donor" evidence="1">
    <location>
        <position position="208"/>
    </location>
</feature>
<feature type="binding site" evidence="1">
    <location>
        <position position="7"/>
    </location>
    <ligand>
        <name>3-amino-2-oxopropyl phosphate</name>
        <dbReference type="ChEBI" id="CHEBI:57279"/>
    </ligand>
</feature>
<feature type="binding site" evidence="1">
    <location>
        <position position="18"/>
    </location>
    <ligand>
        <name>3-amino-2-oxopropyl phosphate</name>
        <dbReference type="ChEBI" id="CHEBI:57279"/>
    </ligand>
</feature>
<feature type="binding site" evidence="1">
    <location>
        <position position="45"/>
    </location>
    <ligand>
        <name>1-deoxy-D-xylulose 5-phosphate</name>
        <dbReference type="ChEBI" id="CHEBI:57792"/>
    </ligand>
</feature>
<feature type="binding site" evidence="1">
    <location>
        <position position="50"/>
    </location>
    <ligand>
        <name>1-deoxy-D-xylulose 5-phosphate</name>
        <dbReference type="ChEBI" id="CHEBI:57792"/>
    </ligand>
</feature>
<feature type="binding site" evidence="1">
    <location>
        <position position="113"/>
    </location>
    <ligand>
        <name>1-deoxy-D-xylulose 5-phosphate</name>
        <dbReference type="ChEBI" id="CHEBI:57792"/>
    </ligand>
</feature>
<feature type="binding site" evidence="1">
    <location>
        <position position="209"/>
    </location>
    <ligand>
        <name>3-amino-2-oxopropyl phosphate</name>
        <dbReference type="ChEBI" id="CHEBI:57279"/>
    </ligand>
</feature>
<feature type="binding site" evidence="1">
    <location>
        <begin position="230"/>
        <end position="231"/>
    </location>
    <ligand>
        <name>3-amino-2-oxopropyl phosphate</name>
        <dbReference type="ChEBI" id="CHEBI:57279"/>
    </ligand>
</feature>
<feature type="site" description="Transition state stabilizer" evidence="1">
    <location>
        <position position="166"/>
    </location>
</feature>
<gene>
    <name evidence="1" type="primary">pdxJ</name>
    <name type="ordered locus">LEPBI_I0476</name>
</gene>
<accession>B0SJ25</accession>
<sequence length="260" mass="29082">MTQLSVNVNKIATLRNSRGGSLPSVLKLSELILDSGAHGITVHPRSDERHITKQDVFELQEFLRTYNEKITKLGISKKEYNIEGEPSERFLDLVLKAKPDQATLVPVKPGEITSDHGFQFADQKTFSTLKPIVEAIRKEGIRVSLFMETDFTFYDQVVALGAERIELYTGPFAHAFDLSEEKGKEIFTDYQRAAIEANKLGLAVNAGHDLDTNNLRVFAKLPYLKEVSIGHRLMAQSLVDGLETTVKSYLKVLSLGNETE</sequence>
<proteinExistence type="inferred from homology"/>
<dbReference type="EC" id="2.6.99.2" evidence="1"/>
<dbReference type="EMBL" id="CP000786">
    <property type="protein sequence ID" value="ABZ96614.1"/>
    <property type="molecule type" value="Genomic_DNA"/>
</dbReference>
<dbReference type="RefSeq" id="WP_012387501.1">
    <property type="nucleotide sequence ID" value="NC_010602.1"/>
</dbReference>
<dbReference type="SMR" id="B0SJ25"/>
<dbReference type="STRING" id="456481.LEPBI_I0476"/>
<dbReference type="KEGG" id="lbi:LEPBI_I0476"/>
<dbReference type="HOGENOM" id="CLU_074563_1_0_12"/>
<dbReference type="OrthoDB" id="9806590at2"/>
<dbReference type="BioCyc" id="LBIF456481:LEPBI_RS02330-MONOMER"/>
<dbReference type="UniPathway" id="UPA00244">
    <property type="reaction ID" value="UER00313"/>
</dbReference>
<dbReference type="Proteomes" id="UP000001847">
    <property type="component" value="Chromosome I"/>
</dbReference>
<dbReference type="GO" id="GO:0005829">
    <property type="term" value="C:cytosol"/>
    <property type="evidence" value="ECO:0007669"/>
    <property type="project" value="TreeGrafter"/>
</dbReference>
<dbReference type="GO" id="GO:0033856">
    <property type="term" value="F:pyridoxine 5'-phosphate synthase activity"/>
    <property type="evidence" value="ECO:0007669"/>
    <property type="project" value="UniProtKB-EC"/>
</dbReference>
<dbReference type="GO" id="GO:0008615">
    <property type="term" value="P:pyridoxine biosynthetic process"/>
    <property type="evidence" value="ECO:0007669"/>
    <property type="project" value="UniProtKB-UniRule"/>
</dbReference>
<dbReference type="Gene3D" id="3.20.20.70">
    <property type="entry name" value="Aldolase class I"/>
    <property type="match status" value="1"/>
</dbReference>
<dbReference type="HAMAP" id="MF_00279">
    <property type="entry name" value="PdxJ"/>
    <property type="match status" value="1"/>
</dbReference>
<dbReference type="InterPro" id="IPR013785">
    <property type="entry name" value="Aldolase_TIM"/>
</dbReference>
<dbReference type="InterPro" id="IPR004569">
    <property type="entry name" value="PyrdxlP_synth_PdxJ"/>
</dbReference>
<dbReference type="InterPro" id="IPR036130">
    <property type="entry name" value="Pyridoxine-5'_phos_synth"/>
</dbReference>
<dbReference type="NCBIfam" id="TIGR00559">
    <property type="entry name" value="pdxJ"/>
    <property type="match status" value="1"/>
</dbReference>
<dbReference type="NCBIfam" id="NF003626">
    <property type="entry name" value="PRK05265.1-4"/>
    <property type="match status" value="1"/>
</dbReference>
<dbReference type="PANTHER" id="PTHR30456">
    <property type="entry name" value="PYRIDOXINE 5'-PHOSPHATE SYNTHASE"/>
    <property type="match status" value="1"/>
</dbReference>
<dbReference type="PANTHER" id="PTHR30456:SF0">
    <property type="entry name" value="PYRIDOXINE 5'-PHOSPHATE SYNTHASE"/>
    <property type="match status" value="1"/>
</dbReference>
<dbReference type="Pfam" id="PF03740">
    <property type="entry name" value="PdxJ"/>
    <property type="match status" value="1"/>
</dbReference>
<dbReference type="SUPFAM" id="SSF63892">
    <property type="entry name" value="Pyridoxine 5'-phosphate synthase"/>
    <property type="match status" value="1"/>
</dbReference>
<keyword id="KW-0963">Cytoplasm</keyword>
<keyword id="KW-0664">Pyridoxine biosynthesis</keyword>
<keyword id="KW-1185">Reference proteome</keyword>
<keyword id="KW-0808">Transferase</keyword>
<evidence type="ECO:0000255" key="1">
    <source>
        <dbReference type="HAMAP-Rule" id="MF_00279"/>
    </source>
</evidence>
<name>PDXJ_LEPBP</name>
<organism>
    <name type="scientific">Leptospira biflexa serovar Patoc (strain Patoc 1 / ATCC 23582 / Paris)</name>
    <dbReference type="NCBI Taxonomy" id="456481"/>
    <lineage>
        <taxon>Bacteria</taxon>
        <taxon>Pseudomonadati</taxon>
        <taxon>Spirochaetota</taxon>
        <taxon>Spirochaetia</taxon>
        <taxon>Leptospirales</taxon>
        <taxon>Leptospiraceae</taxon>
        <taxon>Leptospira</taxon>
    </lineage>
</organism>